<feature type="signal peptide" evidence="4">
    <location>
        <begin position="1"/>
        <end position="20"/>
    </location>
</feature>
<feature type="chain" id="PRO_5023851766" description="AA9 family lytic polysaccharide monooxygenase E">
    <location>
        <begin position="21"/>
        <end position="259"/>
    </location>
</feature>
<feature type="binding site" evidence="3">
    <location>
        <position position="21"/>
    </location>
    <ligand>
        <name>Cu(2+)</name>
        <dbReference type="ChEBI" id="CHEBI:29036"/>
        <note>catalytic</note>
    </ligand>
</feature>
<feature type="binding site" evidence="3">
    <location>
        <position position="99"/>
    </location>
    <ligand>
        <name>Cu(2+)</name>
        <dbReference type="ChEBI" id="CHEBI:29036"/>
        <note>catalytic</note>
    </ligand>
</feature>
<feature type="binding site" evidence="2">
    <location>
        <position position="179"/>
    </location>
    <ligand>
        <name>O2</name>
        <dbReference type="ChEBI" id="CHEBI:15379"/>
    </ligand>
</feature>
<feature type="binding site" evidence="2">
    <location>
        <position position="188"/>
    </location>
    <ligand>
        <name>O2</name>
        <dbReference type="ChEBI" id="CHEBI:15379"/>
    </ligand>
</feature>
<feature type="binding site" evidence="3">
    <location>
        <position position="190"/>
    </location>
    <ligand>
        <name>Cu(2+)</name>
        <dbReference type="ChEBI" id="CHEBI:29036"/>
        <note>catalytic</note>
    </ligand>
</feature>
<feature type="disulfide bond" evidence="3">
    <location>
        <begin position="69"/>
        <end position="193"/>
    </location>
</feature>
<gene>
    <name evidence="6" type="primary">LPMO9E</name>
    <name evidence="6" type="synonym">AA9E</name>
</gene>
<protein>
    <recommendedName>
        <fullName evidence="6">AA9 family lytic polysaccharide monooxygenase E</fullName>
        <shortName evidence="6">AA9E</shortName>
        <shortName evidence="6">LPMO9E</shortName>
        <ecNumber evidence="3">1.14.99.56</ecNumber>
    </recommendedName>
    <alternativeName>
        <fullName evidence="7">Cellulase LPMO9E</fullName>
    </alternativeName>
    <alternativeName>
        <fullName evidence="7">Endo-beta-1,4-glucanase LPMO9E</fullName>
        <shortName evidence="7">Endoglucanase LPMO9E</shortName>
    </alternativeName>
    <alternativeName>
        <fullName evidence="7">Glycosyl hydrolase 61 family protein LPMO9E</fullName>
    </alternativeName>
</protein>
<proteinExistence type="evidence at protein level"/>
<accession>A0A5J6BJT0</accession>
<dbReference type="EC" id="1.14.99.56" evidence="3"/>
<dbReference type="EMBL" id="MK135886">
    <property type="protein sequence ID" value="QDV60869.1"/>
    <property type="molecule type" value="Genomic_DNA"/>
</dbReference>
<dbReference type="SMR" id="A0A5J6BJT0"/>
<dbReference type="GO" id="GO:0005576">
    <property type="term" value="C:extracellular region"/>
    <property type="evidence" value="ECO:0007669"/>
    <property type="project" value="UniProtKB-SubCell"/>
</dbReference>
<dbReference type="GO" id="GO:0046872">
    <property type="term" value="F:metal ion binding"/>
    <property type="evidence" value="ECO:0007669"/>
    <property type="project" value="UniProtKB-KW"/>
</dbReference>
<dbReference type="GO" id="GO:0004497">
    <property type="term" value="F:monooxygenase activity"/>
    <property type="evidence" value="ECO:0007669"/>
    <property type="project" value="UniProtKB-KW"/>
</dbReference>
<dbReference type="GO" id="GO:0030245">
    <property type="term" value="P:cellulose catabolic process"/>
    <property type="evidence" value="ECO:0007669"/>
    <property type="project" value="UniProtKB-KW"/>
</dbReference>
<dbReference type="CDD" id="cd21175">
    <property type="entry name" value="LPMO_AA9"/>
    <property type="match status" value="1"/>
</dbReference>
<dbReference type="Gene3D" id="2.70.50.70">
    <property type="match status" value="1"/>
</dbReference>
<dbReference type="InterPro" id="IPR049892">
    <property type="entry name" value="AA9"/>
</dbReference>
<dbReference type="InterPro" id="IPR005103">
    <property type="entry name" value="AA9_LPMO"/>
</dbReference>
<dbReference type="PANTHER" id="PTHR33353:SF9">
    <property type="entry name" value="ENDOGLUCANASE II"/>
    <property type="match status" value="1"/>
</dbReference>
<dbReference type="PANTHER" id="PTHR33353">
    <property type="entry name" value="PUTATIVE (AFU_ORTHOLOGUE AFUA_1G12560)-RELATED"/>
    <property type="match status" value="1"/>
</dbReference>
<dbReference type="Pfam" id="PF03443">
    <property type="entry name" value="AA9"/>
    <property type="match status" value="1"/>
</dbReference>
<comment type="function">
    <text evidence="1">Lytic polysaccharide monooxygenase (LPMO) that depolymerizes crystalline and amorphous polysaccharides via the oxidation of scissile alpha- or beta-(1-4)-glycosidic bonds, yielding C1 or C4 oxidation products (By similarity). Catalysis by LPMOs requires the reduction of the active-site copper from Cu(II) to Cu(I) by a reducing agent and H(2)O(2) or O(2) as a cosubstrate (By similarity).</text>
</comment>
<comment type="catalytic activity">
    <reaction evidence="3">
        <text>[(1-&gt;4)-beta-D-glucosyl]n+m + reduced acceptor + O2 = 4-dehydro-beta-D-glucosyl-[(1-&gt;4)-beta-D-glucosyl]n-1 + [(1-&gt;4)-beta-D-glucosyl]m + acceptor + H2O.</text>
        <dbReference type="EC" id="1.14.99.56"/>
    </reaction>
</comment>
<comment type="cofactor">
    <cofactor evidence="2">
        <name>Cu(2+)</name>
        <dbReference type="ChEBI" id="CHEBI:29036"/>
    </cofactor>
    <text evidence="2">Binds 1 copper ion per subunit.</text>
</comment>
<comment type="subcellular location">
    <subcellularLocation>
        <location evidence="8">Secreted</location>
    </subcellularLocation>
</comment>
<comment type="induction">
    <text evidence="5">Expression is up-regulated during growth on wheat bran compared to that on glucose.</text>
</comment>
<comment type="biotechnology">
    <text evidence="1">Lignocellulose is the most abundant polymeric composite on Earth and is a recalcitrant but promising renewable substrate for industrial biotechnology applications. Together with cellobiose dehydrogenases (CDHs) an enzymatic system capable of oxidative cellulose cleavage is formed, which increases the efficiency of cellulases and put LPMOs at focus of biofuel research.</text>
</comment>
<comment type="similarity">
    <text evidence="7">Belongs to the polysaccharide monooxygenase AA9 family.</text>
</comment>
<organism>
    <name type="scientific">Malbranchea cinnamomea</name>
    <name type="common">Thermophilic fungus</name>
    <name type="synonym">Malbranchea sulfurea</name>
    <dbReference type="NCBI Taxonomy" id="5041"/>
    <lineage>
        <taxon>Eukaryota</taxon>
        <taxon>Fungi</taxon>
        <taxon>Dikarya</taxon>
        <taxon>Ascomycota</taxon>
        <taxon>Pezizomycotina</taxon>
        <taxon>Eurotiomycetes</taxon>
        <taxon>Eurotiomycetidae</taxon>
        <taxon>Onygenales</taxon>
        <taxon>Malbrancheaceae</taxon>
        <taxon>Malbranchea</taxon>
    </lineage>
</organism>
<evidence type="ECO:0000250" key="1">
    <source>
        <dbReference type="UniProtKB" id="A0A5J6BJN2"/>
    </source>
</evidence>
<evidence type="ECO:0000250" key="2">
    <source>
        <dbReference type="UniProtKB" id="Q1K8B6"/>
    </source>
</evidence>
<evidence type="ECO:0000250" key="3">
    <source>
        <dbReference type="UniProtKB" id="Q7Z9M7"/>
    </source>
</evidence>
<evidence type="ECO:0000255" key="4"/>
<evidence type="ECO:0000269" key="5">
    <source>
    </source>
</evidence>
<evidence type="ECO:0000303" key="6">
    <source>
    </source>
</evidence>
<evidence type="ECO:0000305" key="7"/>
<evidence type="ECO:0000305" key="8">
    <source>
    </source>
</evidence>
<reference key="1">
    <citation type="journal article" date="2019" name="Appl. Environ. Microbiol.">
        <title>Specific xylan activity revealed for AA9 lytic polysaccharide monooxygenases of the thermophilic fungus Malbranchea cinnamomea by functional characterization.</title>
        <authorList>
            <person name="Huettner S."/>
            <person name="Varnai A."/>
            <person name="Petrovic D.M."/>
            <person name="Bach C.X."/>
            <person name="Kim Anh D.T."/>
            <person name="Thanh V.N."/>
            <person name="Eijsink V.G.H."/>
            <person name="Larsbrink J."/>
            <person name="Olsson L."/>
        </authorList>
    </citation>
    <scope>NUCLEOTIDE SEQUENCE [GENOMIC DNA]</scope>
    <scope>FUNCTION</scope>
    <scope>CATALYTIC ACTIVITY</scope>
    <source>
        <strain>FCH 10.5</strain>
    </source>
</reference>
<reference key="2">
    <citation type="journal article" date="2017" name="Biotechnol. Biofuels">
        <title>Combined genome and transcriptome sequencing to investigate the plant cell wall degrading enzyme system in the thermophilic fungus Malbranchea cinnamomea.</title>
        <authorList>
            <person name="Huettner S."/>
            <person name="Nguyen T.T."/>
            <person name="Granchi Z."/>
            <person name="Chin-A-Woeng T."/>
            <person name="Ahren D."/>
            <person name="Larsbrink J."/>
            <person name="Thanh V.N."/>
            <person name="Olsson L."/>
        </authorList>
    </citation>
    <scope>INDUCTION</scope>
</reference>
<name>LP9E_MALCI</name>
<keyword id="KW-0119">Carbohydrate metabolism</keyword>
<keyword id="KW-0136">Cellulose degradation</keyword>
<keyword id="KW-0186">Copper</keyword>
<keyword id="KW-1015">Disulfide bond</keyword>
<keyword id="KW-0479">Metal-binding</keyword>
<keyword id="KW-0503">Monooxygenase</keyword>
<keyword id="KW-0560">Oxidoreductase</keyword>
<keyword id="KW-0624">Polysaccharide degradation</keyword>
<keyword id="KW-0964">Secreted</keyword>
<keyword id="KW-0732">Signal</keyword>
<sequence>MKATVLAGLAAVIAAQGVAGHATFQQLWVDGEDKISACARLPLSNSPVTDVNSAEIACNANSGPAAEKCTVSAGGVVTVEMHQQPGDRSCDNEAIGGNHWGPVLVYMSKVDDSATADGSGGWFKIFEDTWAPAPNSNSGSDDYWGVKDLNAHCGRMDVPIPADLAPGDYLLRAEVIALHTASSPGGAQFYMTCYQLTVDGEGSQSPQTVSFPGAYSPSDPGIQINIYQKLTEYVSPGPAVIEGGTTVEAGTGGSTIPAN</sequence>